<name>CCA_VEREI</name>
<organism>
    <name type="scientific">Verminephrobacter eiseniae (strain EF01-2)</name>
    <dbReference type="NCBI Taxonomy" id="391735"/>
    <lineage>
        <taxon>Bacteria</taxon>
        <taxon>Pseudomonadati</taxon>
        <taxon>Pseudomonadota</taxon>
        <taxon>Betaproteobacteria</taxon>
        <taxon>Burkholderiales</taxon>
        <taxon>Comamonadaceae</taxon>
        <taxon>Verminephrobacter</taxon>
    </lineage>
</organism>
<protein>
    <recommendedName>
        <fullName evidence="1">Multifunctional CCA protein</fullName>
    </recommendedName>
    <domain>
        <recommendedName>
            <fullName evidence="1">CCA-adding enzyme</fullName>
            <ecNumber evidence="1">2.7.7.72</ecNumber>
        </recommendedName>
        <alternativeName>
            <fullName evidence="1">CCA tRNA nucleotidyltransferase</fullName>
        </alternativeName>
        <alternativeName>
            <fullName evidence="1">tRNA CCA-pyrophosphorylase</fullName>
        </alternativeName>
        <alternativeName>
            <fullName evidence="1">tRNA adenylyl-/cytidylyl-transferase</fullName>
        </alternativeName>
        <alternativeName>
            <fullName evidence="1">tRNA nucleotidyltransferase</fullName>
        </alternativeName>
        <alternativeName>
            <fullName evidence="1">tRNA-NT</fullName>
        </alternativeName>
    </domain>
    <domain>
        <recommendedName>
            <fullName evidence="1">2'-nucleotidase</fullName>
            <ecNumber evidence="1">3.1.3.-</ecNumber>
        </recommendedName>
    </domain>
    <domain>
        <recommendedName>
            <fullName evidence="1">2',3'-cyclic phosphodiesterase</fullName>
            <ecNumber evidence="1">3.1.4.-</ecNumber>
        </recommendedName>
    </domain>
    <domain>
        <recommendedName>
            <fullName evidence="1">Phosphatase</fullName>
            <ecNumber evidence="1">3.1.3.-</ecNumber>
        </recommendedName>
    </domain>
</protein>
<reference key="1">
    <citation type="submission" date="2006-12" db="EMBL/GenBank/DDBJ databases">
        <title>Complete sequence of chromosome 1 of Verminephrobacter eiseniae EF01-2.</title>
        <authorList>
            <person name="Copeland A."/>
            <person name="Lucas S."/>
            <person name="Lapidus A."/>
            <person name="Barry K."/>
            <person name="Detter J.C."/>
            <person name="Glavina del Rio T."/>
            <person name="Dalin E."/>
            <person name="Tice H."/>
            <person name="Pitluck S."/>
            <person name="Chertkov O."/>
            <person name="Brettin T."/>
            <person name="Bruce D."/>
            <person name="Han C."/>
            <person name="Tapia R."/>
            <person name="Gilna P."/>
            <person name="Schmutz J."/>
            <person name="Larimer F."/>
            <person name="Land M."/>
            <person name="Hauser L."/>
            <person name="Kyrpides N."/>
            <person name="Kim E."/>
            <person name="Stahl D."/>
            <person name="Richardson P."/>
        </authorList>
    </citation>
    <scope>NUCLEOTIDE SEQUENCE [LARGE SCALE GENOMIC DNA]</scope>
    <source>
        <strain>EF01-2</strain>
    </source>
</reference>
<proteinExistence type="inferred from homology"/>
<evidence type="ECO:0000255" key="1">
    <source>
        <dbReference type="HAMAP-Rule" id="MF_01261"/>
    </source>
</evidence>
<keyword id="KW-0067">ATP-binding</keyword>
<keyword id="KW-0378">Hydrolase</keyword>
<keyword id="KW-0460">Magnesium</keyword>
<keyword id="KW-0479">Metal-binding</keyword>
<keyword id="KW-0511">Multifunctional enzyme</keyword>
<keyword id="KW-0533">Nickel</keyword>
<keyword id="KW-0547">Nucleotide-binding</keyword>
<keyword id="KW-0548">Nucleotidyltransferase</keyword>
<keyword id="KW-1185">Reference proteome</keyword>
<keyword id="KW-0692">RNA repair</keyword>
<keyword id="KW-0694">RNA-binding</keyword>
<keyword id="KW-0808">Transferase</keyword>
<keyword id="KW-0819">tRNA processing</keyword>
<gene>
    <name evidence="1" type="primary">cca</name>
    <name type="ordered locus">Veis_1469</name>
</gene>
<feature type="chain" id="PRO_1000054305" description="Multifunctional CCA protein">
    <location>
        <begin position="1"/>
        <end position="413"/>
    </location>
</feature>
<feature type="domain" description="HD" evidence="1">
    <location>
        <begin position="230"/>
        <end position="331"/>
    </location>
</feature>
<feature type="binding site" evidence="1">
    <location>
        <position position="8"/>
    </location>
    <ligand>
        <name>ATP</name>
        <dbReference type="ChEBI" id="CHEBI:30616"/>
    </ligand>
</feature>
<feature type="binding site" evidence="1">
    <location>
        <position position="8"/>
    </location>
    <ligand>
        <name>CTP</name>
        <dbReference type="ChEBI" id="CHEBI:37563"/>
    </ligand>
</feature>
<feature type="binding site" evidence="1">
    <location>
        <position position="11"/>
    </location>
    <ligand>
        <name>ATP</name>
        <dbReference type="ChEBI" id="CHEBI:30616"/>
    </ligand>
</feature>
<feature type="binding site" evidence="1">
    <location>
        <position position="11"/>
    </location>
    <ligand>
        <name>CTP</name>
        <dbReference type="ChEBI" id="CHEBI:37563"/>
    </ligand>
</feature>
<feature type="binding site" evidence="1">
    <location>
        <position position="21"/>
    </location>
    <ligand>
        <name>Mg(2+)</name>
        <dbReference type="ChEBI" id="CHEBI:18420"/>
    </ligand>
</feature>
<feature type="binding site" evidence="1">
    <location>
        <position position="23"/>
    </location>
    <ligand>
        <name>Mg(2+)</name>
        <dbReference type="ChEBI" id="CHEBI:18420"/>
    </ligand>
</feature>
<feature type="binding site" evidence="1">
    <location>
        <position position="91"/>
    </location>
    <ligand>
        <name>ATP</name>
        <dbReference type="ChEBI" id="CHEBI:30616"/>
    </ligand>
</feature>
<feature type="binding site" evidence="1">
    <location>
        <position position="91"/>
    </location>
    <ligand>
        <name>CTP</name>
        <dbReference type="ChEBI" id="CHEBI:37563"/>
    </ligand>
</feature>
<feature type="binding site" evidence="1">
    <location>
        <position position="141"/>
    </location>
    <ligand>
        <name>ATP</name>
        <dbReference type="ChEBI" id="CHEBI:30616"/>
    </ligand>
</feature>
<feature type="binding site" evidence="1">
    <location>
        <position position="141"/>
    </location>
    <ligand>
        <name>CTP</name>
        <dbReference type="ChEBI" id="CHEBI:37563"/>
    </ligand>
</feature>
<feature type="binding site" evidence="1">
    <location>
        <position position="144"/>
    </location>
    <ligand>
        <name>ATP</name>
        <dbReference type="ChEBI" id="CHEBI:30616"/>
    </ligand>
</feature>
<feature type="binding site" evidence="1">
    <location>
        <position position="144"/>
    </location>
    <ligand>
        <name>CTP</name>
        <dbReference type="ChEBI" id="CHEBI:37563"/>
    </ligand>
</feature>
<accession>A1WHX2</accession>
<sequence>MQIYMVGGAVRDRLLGRPVHDRDWVVVGATPEQMRAQGYLPVGRDFPVFLHPATREEYALARTERKSGRGYRGFVVHSAPEVTLQEDLSRRDLTINAIATSADASGAGCLIDPHHGARDIAARVLRHVSTAFREDPVRILRVARFAARLPDFTVAPETLQLMREMVAHGETDHLVAERVWQELARGLMAEKPSRMFEVLRACGALERLLPEVERLWGVPQSAEHHPEIDTGAHLLLVLDMAARLQAPLAVRFACLAHDLGKGSTPADMLPRHIGHETRGAELLKHLAERLRVPADCRATADKVAREHGHIHCSNALSAAALVRLLERCDALRLPQRFADILLACECDARGRLGFAESAYPQRPRLTAALAAAQSVHSSAIAAQAAARGLAGPQVGALIRQARVAAVAQWLASQ</sequence>
<comment type="function">
    <text evidence="1">Catalyzes the addition and repair of the essential 3'-terminal CCA sequence in tRNAs without using a nucleic acid template. Adds these three nucleotides in the order of C, C, and A to the tRNA nucleotide-73, using CTP and ATP as substrates and producing inorganic pyrophosphate. tRNA 3'-terminal CCA addition is required both for tRNA processing and repair. Also involved in tRNA surveillance by mediating tandem CCA addition to generate a CCACCA at the 3' terminus of unstable tRNAs. While stable tRNAs receive only 3'-terminal CCA, unstable tRNAs are marked with CCACCA and rapidly degraded.</text>
</comment>
<comment type="catalytic activity">
    <reaction evidence="1">
        <text>a tRNA precursor + 2 CTP + ATP = a tRNA with a 3' CCA end + 3 diphosphate</text>
        <dbReference type="Rhea" id="RHEA:14433"/>
        <dbReference type="Rhea" id="RHEA-COMP:10465"/>
        <dbReference type="Rhea" id="RHEA-COMP:10468"/>
        <dbReference type="ChEBI" id="CHEBI:30616"/>
        <dbReference type="ChEBI" id="CHEBI:33019"/>
        <dbReference type="ChEBI" id="CHEBI:37563"/>
        <dbReference type="ChEBI" id="CHEBI:74896"/>
        <dbReference type="ChEBI" id="CHEBI:83071"/>
        <dbReference type="EC" id="2.7.7.72"/>
    </reaction>
</comment>
<comment type="catalytic activity">
    <reaction evidence="1">
        <text>a tRNA with a 3' CCA end + 2 CTP + ATP = a tRNA with a 3' CCACCA end + 3 diphosphate</text>
        <dbReference type="Rhea" id="RHEA:76235"/>
        <dbReference type="Rhea" id="RHEA-COMP:10468"/>
        <dbReference type="Rhea" id="RHEA-COMP:18655"/>
        <dbReference type="ChEBI" id="CHEBI:30616"/>
        <dbReference type="ChEBI" id="CHEBI:33019"/>
        <dbReference type="ChEBI" id="CHEBI:37563"/>
        <dbReference type="ChEBI" id="CHEBI:83071"/>
        <dbReference type="ChEBI" id="CHEBI:195187"/>
    </reaction>
    <physiologicalReaction direction="left-to-right" evidence="1">
        <dbReference type="Rhea" id="RHEA:76236"/>
    </physiologicalReaction>
</comment>
<comment type="cofactor">
    <cofactor evidence="1">
        <name>Mg(2+)</name>
        <dbReference type="ChEBI" id="CHEBI:18420"/>
    </cofactor>
    <text evidence="1">Magnesium is required for nucleotidyltransferase activity.</text>
</comment>
<comment type="cofactor">
    <cofactor evidence="1">
        <name>Ni(2+)</name>
        <dbReference type="ChEBI" id="CHEBI:49786"/>
    </cofactor>
    <text evidence="1">Nickel for phosphatase activity.</text>
</comment>
<comment type="subunit">
    <text evidence="1">Monomer. Can also form homodimers and oligomers.</text>
</comment>
<comment type="domain">
    <text evidence="1">Comprises two domains: an N-terminal domain containing the nucleotidyltransferase activity and a C-terminal HD domain associated with both phosphodiesterase and phosphatase activities.</text>
</comment>
<comment type="miscellaneous">
    <text evidence="1">A single active site specifically recognizes both ATP and CTP and is responsible for their addition.</text>
</comment>
<comment type="similarity">
    <text evidence="1">Belongs to the tRNA nucleotidyltransferase/poly(A) polymerase family. Bacterial CCA-adding enzyme type 1 subfamily.</text>
</comment>
<dbReference type="EC" id="2.7.7.72" evidence="1"/>
<dbReference type="EC" id="3.1.3.-" evidence="1"/>
<dbReference type="EC" id="3.1.4.-" evidence="1"/>
<dbReference type="EMBL" id="CP000542">
    <property type="protein sequence ID" value="ABM57229.1"/>
    <property type="molecule type" value="Genomic_DNA"/>
</dbReference>
<dbReference type="RefSeq" id="WP_011809236.1">
    <property type="nucleotide sequence ID" value="NC_008786.1"/>
</dbReference>
<dbReference type="SMR" id="A1WHX2"/>
<dbReference type="STRING" id="391735.Veis_1469"/>
<dbReference type="GeneID" id="76460092"/>
<dbReference type="KEGG" id="vei:Veis_1469"/>
<dbReference type="eggNOG" id="COG0617">
    <property type="taxonomic scope" value="Bacteria"/>
</dbReference>
<dbReference type="HOGENOM" id="CLU_015961_1_1_4"/>
<dbReference type="OrthoDB" id="9805698at2"/>
<dbReference type="Proteomes" id="UP000000374">
    <property type="component" value="Chromosome"/>
</dbReference>
<dbReference type="GO" id="GO:0005524">
    <property type="term" value="F:ATP binding"/>
    <property type="evidence" value="ECO:0007669"/>
    <property type="project" value="UniProtKB-UniRule"/>
</dbReference>
<dbReference type="GO" id="GO:0004810">
    <property type="term" value="F:CCA tRNA nucleotidyltransferase activity"/>
    <property type="evidence" value="ECO:0007669"/>
    <property type="project" value="UniProtKB-UniRule"/>
</dbReference>
<dbReference type="GO" id="GO:0004112">
    <property type="term" value="F:cyclic-nucleotide phosphodiesterase activity"/>
    <property type="evidence" value="ECO:0007669"/>
    <property type="project" value="UniProtKB-UniRule"/>
</dbReference>
<dbReference type="GO" id="GO:0000287">
    <property type="term" value="F:magnesium ion binding"/>
    <property type="evidence" value="ECO:0007669"/>
    <property type="project" value="UniProtKB-UniRule"/>
</dbReference>
<dbReference type="GO" id="GO:0016791">
    <property type="term" value="F:phosphatase activity"/>
    <property type="evidence" value="ECO:0007669"/>
    <property type="project" value="UniProtKB-UniRule"/>
</dbReference>
<dbReference type="GO" id="GO:0000049">
    <property type="term" value="F:tRNA binding"/>
    <property type="evidence" value="ECO:0007669"/>
    <property type="project" value="UniProtKB-UniRule"/>
</dbReference>
<dbReference type="GO" id="GO:0042245">
    <property type="term" value="P:RNA repair"/>
    <property type="evidence" value="ECO:0007669"/>
    <property type="project" value="UniProtKB-KW"/>
</dbReference>
<dbReference type="GO" id="GO:0001680">
    <property type="term" value="P:tRNA 3'-terminal CCA addition"/>
    <property type="evidence" value="ECO:0007669"/>
    <property type="project" value="UniProtKB-UniRule"/>
</dbReference>
<dbReference type="CDD" id="cd00077">
    <property type="entry name" value="HDc"/>
    <property type="match status" value="1"/>
</dbReference>
<dbReference type="CDD" id="cd05398">
    <property type="entry name" value="NT_ClassII-CCAase"/>
    <property type="match status" value="1"/>
</dbReference>
<dbReference type="Gene3D" id="3.30.460.10">
    <property type="entry name" value="Beta Polymerase, domain 2"/>
    <property type="match status" value="1"/>
</dbReference>
<dbReference type="Gene3D" id="1.10.3090.10">
    <property type="entry name" value="cca-adding enzyme, domain 2"/>
    <property type="match status" value="1"/>
</dbReference>
<dbReference type="HAMAP" id="MF_01261">
    <property type="entry name" value="CCA_bact_type1"/>
    <property type="match status" value="1"/>
</dbReference>
<dbReference type="InterPro" id="IPR012006">
    <property type="entry name" value="CCA_bact"/>
</dbReference>
<dbReference type="InterPro" id="IPR003607">
    <property type="entry name" value="HD/PDEase_dom"/>
</dbReference>
<dbReference type="InterPro" id="IPR006674">
    <property type="entry name" value="HD_domain"/>
</dbReference>
<dbReference type="InterPro" id="IPR043519">
    <property type="entry name" value="NT_sf"/>
</dbReference>
<dbReference type="InterPro" id="IPR002646">
    <property type="entry name" value="PolA_pol_head_dom"/>
</dbReference>
<dbReference type="InterPro" id="IPR032828">
    <property type="entry name" value="PolyA_RNA-bd"/>
</dbReference>
<dbReference type="InterPro" id="IPR050124">
    <property type="entry name" value="tRNA_CCA-adding_enzyme"/>
</dbReference>
<dbReference type="NCBIfam" id="NF008137">
    <property type="entry name" value="PRK10885.1"/>
    <property type="match status" value="1"/>
</dbReference>
<dbReference type="PANTHER" id="PTHR47545">
    <property type="entry name" value="MULTIFUNCTIONAL CCA PROTEIN"/>
    <property type="match status" value="1"/>
</dbReference>
<dbReference type="PANTHER" id="PTHR47545:SF1">
    <property type="entry name" value="MULTIFUNCTIONAL CCA PROTEIN"/>
    <property type="match status" value="1"/>
</dbReference>
<dbReference type="Pfam" id="PF01966">
    <property type="entry name" value="HD"/>
    <property type="match status" value="1"/>
</dbReference>
<dbReference type="Pfam" id="PF01743">
    <property type="entry name" value="PolyA_pol"/>
    <property type="match status" value="1"/>
</dbReference>
<dbReference type="Pfam" id="PF12627">
    <property type="entry name" value="PolyA_pol_RNAbd"/>
    <property type="match status" value="1"/>
</dbReference>
<dbReference type="PIRSF" id="PIRSF000813">
    <property type="entry name" value="CCA_bact"/>
    <property type="match status" value="1"/>
</dbReference>
<dbReference type="SUPFAM" id="SSF81301">
    <property type="entry name" value="Nucleotidyltransferase"/>
    <property type="match status" value="1"/>
</dbReference>
<dbReference type="SUPFAM" id="SSF81891">
    <property type="entry name" value="Poly A polymerase C-terminal region-like"/>
    <property type="match status" value="1"/>
</dbReference>
<dbReference type="PROSITE" id="PS51831">
    <property type="entry name" value="HD"/>
    <property type="match status" value="1"/>
</dbReference>